<proteinExistence type="inferred from homology"/>
<name>SYL_DESHD</name>
<feature type="chain" id="PRO_1000199196" description="Leucine--tRNA ligase">
    <location>
        <begin position="1"/>
        <end position="827"/>
    </location>
</feature>
<feature type="short sequence motif" description="'HIGH' region">
    <location>
        <begin position="42"/>
        <end position="52"/>
    </location>
</feature>
<feature type="short sequence motif" description="'KMSKS' region">
    <location>
        <begin position="583"/>
        <end position="587"/>
    </location>
</feature>
<feature type="binding site" evidence="1">
    <location>
        <position position="586"/>
    </location>
    <ligand>
        <name>ATP</name>
        <dbReference type="ChEBI" id="CHEBI:30616"/>
    </ligand>
</feature>
<accession>B8FUR3</accession>
<gene>
    <name evidence="1" type="primary">leuS</name>
    <name type="ordered locus">Dhaf_4328</name>
</gene>
<organism>
    <name type="scientific">Desulfitobacterium hafniense (strain DSM 10664 / DCB-2)</name>
    <dbReference type="NCBI Taxonomy" id="272564"/>
    <lineage>
        <taxon>Bacteria</taxon>
        <taxon>Bacillati</taxon>
        <taxon>Bacillota</taxon>
        <taxon>Clostridia</taxon>
        <taxon>Eubacteriales</taxon>
        <taxon>Desulfitobacteriaceae</taxon>
        <taxon>Desulfitobacterium</taxon>
    </lineage>
</organism>
<sequence>MQEKYLFSEIEPKWQKKWVDRKDYQAEEHSDKPKFYALAMFPYPSGNLHMGHVRNYSIVDVIARFKRMRGYNVLHPIGWDSFGLPAENAAIKNQTPPAEWTWKNIANMKRQLQEMGISYDWEREVTTCHPDYYKFTQWIFLEFYKHGLVYKKKAGVNWCPSCATVLANEQVVDGACERCDTAVTKKDLEQWFFKITDYAQVLLDDLEKLPGWPDKVKTMQKNWIGRSEGAEVEFDLENHGDKIRVYTTRVDTIFGVSYVVLAPEHPLVQKLIAGTEYENDVQAFIERMKGLNEIARTSTETEKEGLFTGAYCINPYSGEKVPIWIANYVLFEYGTGAVMGVPAHDERDFEFAGKYKLPIKTVILPEGTPVEEKDTPLQAAFVEEGMMVNSGEYDGLKNVEAWEKMCDKAEHDGFGERKVNFRLRDWLISRQRYWGAPIPMIYCDHCGIVPVPQDQLPVMLPDDVVFKAGENPLTTSESFKQTICPTCGGKARRETDTMDTFMCSSWYFLRYTDPHNAQLPFAKEAADHWMNVDQYVGGVEHAILHLLYSRFFTKALRDFGYLKVDEPFANLLTQGMVCLGGAKMSKSKGNVVSPEEIISKYGADTARLFILFAAPPERDLEWNDQGVEGCYRFLNRVWRLAAQYEEVLKTTGAGANEFGELDKAAKDMRRQTHQTIQRVTSDVGARFNFNTAVSAIMELVNALYLYKEQPQVNLAVAREALESILILLAPFAPHITEEIWSELGHEDSIHSREWPQVDEEALVQEEVTVVLQINGKVKERIQVPAQISAAELEAQVRQLPRLGEWTQGKQILKIVTVPGKLVNVVVK</sequence>
<keyword id="KW-0030">Aminoacyl-tRNA synthetase</keyword>
<keyword id="KW-0067">ATP-binding</keyword>
<keyword id="KW-0963">Cytoplasm</keyword>
<keyword id="KW-0436">Ligase</keyword>
<keyword id="KW-0547">Nucleotide-binding</keyword>
<keyword id="KW-0648">Protein biosynthesis</keyword>
<evidence type="ECO:0000255" key="1">
    <source>
        <dbReference type="HAMAP-Rule" id="MF_00049"/>
    </source>
</evidence>
<protein>
    <recommendedName>
        <fullName evidence="1">Leucine--tRNA ligase</fullName>
        <ecNumber evidence="1">6.1.1.4</ecNumber>
    </recommendedName>
    <alternativeName>
        <fullName evidence="1">Leucyl-tRNA synthetase</fullName>
        <shortName evidence="1">LeuRS</shortName>
    </alternativeName>
</protein>
<comment type="catalytic activity">
    <reaction evidence="1">
        <text>tRNA(Leu) + L-leucine + ATP = L-leucyl-tRNA(Leu) + AMP + diphosphate</text>
        <dbReference type="Rhea" id="RHEA:11688"/>
        <dbReference type="Rhea" id="RHEA-COMP:9613"/>
        <dbReference type="Rhea" id="RHEA-COMP:9622"/>
        <dbReference type="ChEBI" id="CHEBI:30616"/>
        <dbReference type="ChEBI" id="CHEBI:33019"/>
        <dbReference type="ChEBI" id="CHEBI:57427"/>
        <dbReference type="ChEBI" id="CHEBI:78442"/>
        <dbReference type="ChEBI" id="CHEBI:78494"/>
        <dbReference type="ChEBI" id="CHEBI:456215"/>
        <dbReference type="EC" id="6.1.1.4"/>
    </reaction>
</comment>
<comment type="subcellular location">
    <subcellularLocation>
        <location evidence="1">Cytoplasm</location>
    </subcellularLocation>
</comment>
<comment type="similarity">
    <text evidence="1">Belongs to the class-I aminoacyl-tRNA synthetase family.</text>
</comment>
<dbReference type="EC" id="6.1.1.4" evidence="1"/>
<dbReference type="EMBL" id="CP001336">
    <property type="protein sequence ID" value="ACL22333.1"/>
    <property type="molecule type" value="Genomic_DNA"/>
</dbReference>
<dbReference type="RefSeq" id="WP_011460890.1">
    <property type="nucleotide sequence ID" value="NC_011830.1"/>
</dbReference>
<dbReference type="SMR" id="B8FUR3"/>
<dbReference type="KEGG" id="dhd:Dhaf_4328"/>
<dbReference type="HOGENOM" id="CLU_004427_0_0_9"/>
<dbReference type="Proteomes" id="UP000007726">
    <property type="component" value="Chromosome"/>
</dbReference>
<dbReference type="GO" id="GO:0005829">
    <property type="term" value="C:cytosol"/>
    <property type="evidence" value="ECO:0007669"/>
    <property type="project" value="TreeGrafter"/>
</dbReference>
<dbReference type="GO" id="GO:0002161">
    <property type="term" value="F:aminoacyl-tRNA deacylase activity"/>
    <property type="evidence" value="ECO:0007669"/>
    <property type="project" value="InterPro"/>
</dbReference>
<dbReference type="GO" id="GO:0005524">
    <property type="term" value="F:ATP binding"/>
    <property type="evidence" value="ECO:0007669"/>
    <property type="project" value="UniProtKB-UniRule"/>
</dbReference>
<dbReference type="GO" id="GO:0004823">
    <property type="term" value="F:leucine-tRNA ligase activity"/>
    <property type="evidence" value="ECO:0007669"/>
    <property type="project" value="UniProtKB-UniRule"/>
</dbReference>
<dbReference type="GO" id="GO:0006429">
    <property type="term" value="P:leucyl-tRNA aminoacylation"/>
    <property type="evidence" value="ECO:0007669"/>
    <property type="project" value="UniProtKB-UniRule"/>
</dbReference>
<dbReference type="CDD" id="cd07958">
    <property type="entry name" value="Anticodon_Ia_Leu_BEm"/>
    <property type="match status" value="1"/>
</dbReference>
<dbReference type="CDD" id="cd00812">
    <property type="entry name" value="LeuRS_core"/>
    <property type="match status" value="1"/>
</dbReference>
<dbReference type="FunFam" id="3.40.50.620:FF:000003">
    <property type="entry name" value="Leucine--tRNA ligase"/>
    <property type="match status" value="1"/>
</dbReference>
<dbReference type="FunFam" id="3.40.50.620:FF:000056">
    <property type="entry name" value="Leucine--tRNA ligase"/>
    <property type="match status" value="1"/>
</dbReference>
<dbReference type="FunFam" id="1.10.730.10:FF:000011">
    <property type="entry name" value="Leucine--tRNA ligase chloroplastic/mitochondrial"/>
    <property type="match status" value="1"/>
</dbReference>
<dbReference type="Gene3D" id="3.10.20.590">
    <property type="match status" value="1"/>
</dbReference>
<dbReference type="Gene3D" id="3.40.50.620">
    <property type="entry name" value="HUPs"/>
    <property type="match status" value="2"/>
</dbReference>
<dbReference type="Gene3D" id="1.10.730.10">
    <property type="entry name" value="Isoleucyl-tRNA Synthetase, Domain 1"/>
    <property type="match status" value="2"/>
</dbReference>
<dbReference type="HAMAP" id="MF_00049_B">
    <property type="entry name" value="Leu_tRNA_synth_B"/>
    <property type="match status" value="1"/>
</dbReference>
<dbReference type="InterPro" id="IPR001412">
    <property type="entry name" value="aa-tRNA-synth_I_CS"/>
</dbReference>
<dbReference type="InterPro" id="IPR002300">
    <property type="entry name" value="aa-tRNA-synth_Ia"/>
</dbReference>
<dbReference type="InterPro" id="IPR002302">
    <property type="entry name" value="Leu-tRNA-ligase"/>
</dbReference>
<dbReference type="InterPro" id="IPR025709">
    <property type="entry name" value="Leu_tRNA-synth_edit"/>
</dbReference>
<dbReference type="InterPro" id="IPR013155">
    <property type="entry name" value="M/V/L/I-tRNA-synth_anticd-bd"/>
</dbReference>
<dbReference type="InterPro" id="IPR015413">
    <property type="entry name" value="Methionyl/Leucyl_tRNA_Synth"/>
</dbReference>
<dbReference type="InterPro" id="IPR014729">
    <property type="entry name" value="Rossmann-like_a/b/a_fold"/>
</dbReference>
<dbReference type="InterPro" id="IPR009080">
    <property type="entry name" value="tRNAsynth_Ia_anticodon-bd"/>
</dbReference>
<dbReference type="InterPro" id="IPR009008">
    <property type="entry name" value="Val/Leu/Ile-tRNA-synth_edit"/>
</dbReference>
<dbReference type="NCBIfam" id="TIGR00396">
    <property type="entry name" value="leuS_bact"/>
    <property type="match status" value="1"/>
</dbReference>
<dbReference type="PANTHER" id="PTHR43740:SF2">
    <property type="entry name" value="LEUCINE--TRNA LIGASE, MITOCHONDRIAL"/>
    <property type="match status" value="1"/>
</dbReference>
<dbReference type="PANTHER" id="PTHR43740">
    <property type="entry name" value="LEUCYL-TRNA SYNTHETASE"/>
    <property type="match status" value="1"/>
</dbReference>
<dbReference type="Pfam" id="PF08264">
    <property type="entry name" value="Anticodon_1"/>
    <property type="match status" value="1"/>
</dbReference>
<dbReference type="Pfam" id="PF00133">
    <property type="entry name" value="tRNA-synt_1"/>
    <property type="match status" value="1"/>
</dbReference>
<dbReference type="Pfam" id="PF13603">
    <property type="entry name" value="tRNA-synt_1_2"/>
    <property type="match status" value="1"/>
</dbReference>
<dbReference type="Pfam" id="PF09334">
    <property type="entry name" value="tRNA-synt_1g"/>
    <property type="match status" value="1"/>
</dbReference>
<dbReference type="PRINTS" id="PR00985">
    <property type="entry name" value="TRNASYNTHLEU"/>
</dbReference>
<dbReference type="SUPFAM" id="SSF47323">
    <property type="entry name" value="Anticodon-binding domain of a subclass of class I aminoacyl-tRNA synthetases"/>
    <property type="match status" value="1"/>
</dbReference>
<dbReference type="SUPFAM" id="SSF52374">
    <property type="entry name" value="Nucleotidylyl transferase"/>
    <property type="match status" value="1"/>
</dbReference>
<dbReference type="SUPFAM" id="SSF50677">
    <property type="entry name" value="ValRS/IleRS/LeuRS editing domain"/>
    <property type="match status" value="1"/>
</dbReference>
<dbReference type="PROSITE" id="PS00178">
    <property type="entry name" value="AA_TRNA_LIGASE_I"/>
    <property type="match status" value="1"/>
</dbReference>
<reference key="1">
    <citation type="journal article" date="2012" name="BMC Microbiol.">
        <title>Genome sequence of Desulfitobacterium hafniense DCB-2, a Gram-positive anaerobe capable of dehalogenation and metal reduction.</title>
        <authorList>
            <person name="Kim S.H."/>
            <person name="Harzman C."/>
            <person name="Davis J.K."/>
            <person name="Hutcheson R."/>
            <person name="Broderick J.B."/>
            <person name="Marsh T.L."/>
            <person name="Tiedje J.M."/>
        </authorList>
    </citation>
    <scope>NUCLEOTIDE SEQUENCE [LARGE SCALE GENOMIC DNA]</scope>
    <source>
        <strain>DSM 10664 / DCB-2</strain>
    </source>
</reference>